<evidence type="ECO:0000256" key="1">
    <source>
        <dbReference type="SAM" id="MobiDB-lite"/>
    </source>
</evidence>
<evidence type="ECO:0000305" key="2"/>
<evidence type="ECO:0000305" key="3">
    <source>
    </source>
</evidence>
<accession>Q8TGM8</accession>
<dbReference type="EMBL" id="X97560">
    <property type="status" value="NOT_ANNOTATED_CDS"/>
    <property type="molecule type" value="Genomic_DNA"/>
</dbReference>
<dbReference type="EMBL" id="Z73123">
    <property type="status" value="NOT_ANNOTATED_CDS"/>
    <property type="molecule type" value="Genomic_DNA"/>
</dbReference>
<dbReference type="EMBL" id="Z73125">
    <property type="status" value="NOT_ANNOTATED_CDS"/>
    <property type="molecule type" value="Genomic_DNA"/>
</dbReference>
<dbReference type="EMBL" id="AF479962">
    <property type="protein sequence ID" value="AAL79275.1"/>
    <property type="molecule type" value="Genomic_DNA"/>
</dbReference>
<dbReference type="SMR" id="Q8TGM8"/>
<dbReference type="STRING" id="4932.YLL019W-A"/>
<dbReference type="PaxDb" id="4932-YLL019W-A"/>
<dbReference type="EnsemblFungi" id="YLL019W-A_mRNA">
    <property type="protein sequence ID" value="YLL019W-A"/>
    <property type="gene ID" value="YLL019W-A"/>
</dbReference>
<dbReference type="AGR" id="SGD:S000028670"/>
<dbReference type="SGD" id="S000028670">
    <property type="gene designation" value="YLL019W-A"/>
</dbReference>
<dbReference type="HOGENOM" id="CLU_3406603_0_0_1"/>
<name>YL019_YEAST</name>
<gene>
    <name type="ordered locus">YLL019W-A</name>
</gene>
<sequence length="30" mass="3540">MHLSTLPNVPWPNRSFTTKRPPLPNMSFSW</sequence>
<comment type="miscellaneous">
    <text evidence="2">Completely overlaps KNS1.</text>
</comment>
<comment type="caution">
    <text evidence="3">Product of a dubious gene prediction unlikely to encode a functional protein. Because of that it is not part of the S.cerevisiae S288c complete/reference proteome set.</text>
</comment>
<feature type="chain" id="PRO_0000299601" description="Putative uncharacterized protein YLL019W-A">
    <location>
        <begin position="1"/>
        <end position="30"/>
    </location>
</feature>
<feature type="region of interest" description="Disordered" evidence="1">
    <location>
        <begin position="1"/>
        <end position="30"/>
    </location>
</feature>
<reference key="1">
    <citation type="journal article" date="1997" name="Yeast">
        <title>The sequence of 32kb on the left arm of yeast chromosome XII reveals six known genes, a new member of the seripauperins family and a new ABC transporter homologous to the human multidrug resistance protein.</title>
        <authorList>
            <person name="Purnelle B."/>
            <person name="Goffeau A."/>
        </authorList>
    </citation>
    <scope>NUCLEOTIDE SEQUENCE [GENOMIC DNA]</scope>
    <source>
        <strain>ATCC 204508 / S288c</strain>
    </source>
</reference>
<reference key="2">
    <citation type="journal article" date="1997" name="Nature">
        <title>The nucleotide sequence of Saccharomyces cerevisiae chromosome XII.</title>
        <authorList>
            <person name="Johnston M."/>
            <person name="Hillier L.W."/>
            <person name="Riles L."/>
            <person name="Albermann K."/>
            <person name="Andre B."/>
            <person name="Ansorge W."/>
            <person name="Benes V."/>
            <person name="Brueckner M."/>
            <person name="Delius H."/>
            <person name="Dubois E."/>
            <person name="Duesterhoeft A."/>
            <person name="Entian K.-D."/>
            <person name="Floeth M."/>
            <person name="Goffeau A."/>
            <person name="Hebling U."/>
            <person name="Heumann K."/>
            <person name="Heuss-Neitzel D."/>
            <person name="Hilbert H."/>
            <person name="Hilger F."/>
            <person name="Kleine K."/>
            <person name="Koetter P."/>
            <person name="Louis E.J."/>
            <person name="Messenguy F."/>
            <person name="Mewes H.-W."/>
            <person name="Miosga T."/>
            <person name="Moestl D."/>
            <person name="Mueller-Auer S."/>
            <person name="Nentwich U."/>
            <person name="Obermaier B."/>
            <person name="Piravandi E."/>
            <person name="Pohl T.M."/>
            <person name="Portetelle D."/>
            <person name="Purnelle B."/>
            <person name="Rechmann S."/>
            <person name="Rieger M."/>
            <person name="Rinke M."/>
            <person name="Rose M."/>
            <person name="Scharfe M."/>
            <person name="Scherens B."/>
            <person name="Scholler P."/>
            <person name="Schwager C."/>
            <person name="Schwarz S."/>
            <person name="Underwood A.P."/>
            <person name="Urrestarazu L.A."/>
            <person name="Vandenbol M."/>
            <person name="Verhasselt P."/>
            <person name="Vierendeels F."/>
            <person name="Voet M."/>
            <person name="Volckaert G."/>
            <person name="Voss H."/>
            <person name="Wambutt R."/>
            <person name="Wedler E."/>
            <person name="Wedler H."/>
            <person name="Zimmermann F.K."/>
            <person name="Zollner A."/>
            <person name="Hani J."/>
            <person name="Hoheisel J.D."/>
        </authorList>
    </citation>
    <scope>NUCLEOTIDE SEQUENCE [LARGE SCALE GENOMIC DNA]</scope>
    <source>
        <strain>ATCC 204508 / S288c</strain>
    </source>
</reference>
<reference key="3">
    <citation type="journal article" date="2014" name="G3 (Bethesda)">
        <title>The reference genome sequence of Saccharomyces cerevisiae: Then and now.</title>
        <authorList>
            <person name="Engel S.R."/>
            <person name="Dietrich F.S."/>
            <person name="Fisk D.G."/>
            <person name="Binkley G."/>
            <person name="Balakrishnan R."/>
            <person name="Costanzo M.C."/>
            <person name="Dwight S.S."/>
            <person name="Hitz B.C."/>
            <person name="Karra K."/>
            <person name="Nash R.S."/>
            <person name="Weng S."/>
            <person name="Wong E.D."/>
            <person name="Lloyd P."/>
            <person name="Skrzypek M.S."/>
            <person name="Miyasato S.R."/>
            <person name="Simison M."/>
            <person name="Cherry J.M."/>
        </authorList>
    </citation>
    <scope>GENOME REANNOTATION</scope>
    <source>
        <strain>ATCC 204508 / S288c</strain>
    </source>
</reference>
<reference key="4">
    <citation type="journal article" date="2002" name="Nat. Biotechnol.">
        <title>An integrated approach for finding overlooked genes in yeast.</title>
        <authorList>
            <person name="Kumar A."/>
            <person name="Harrison P.M."/>
            <person name="Cheung K.-H."/>
            <person name="Lan N."/>
            <person name="Echols N."/>
            <person name="Bertone P."/>
            <person name="Miller P."/>
            <person name="Gerstein M.B."/>
            <person name="Snyder M."/>
        </authorList>
    </citation>
    <scope>NUCLEOTIDE SEQUENCE [GENOMIC DNA]</scope>
</reference>
<organism>
    <name type="scientific">Saccharomyces cerevisiae (strain ATCC 204508 / S288c)</name>
    <name type="common">Baker's yeast</name>
    <dbReference type="NCBI Taxonomy" id="559292"/>
    <lineage>
        <taxon>Eukaryota</taxon>
        <taxon>Fungi</taxon>
        <taxon>Dikarya</taxon>
        <taxon>Ascomycota</taxon>
        <taxon>Saccharomycotina</taxon>
        <taxon>Saccharomycetes</taxon>
        <taxon>Saccharomycetales</taxon>
        <taxon>Saccharomycetaceae</taxon>
        <taxon>Saccharomyces</taxon>
    </lineage>
</organism>
<proteinExistence type="uncertain"/>
<protein>
    <recommendedName>
        <fullName>Putative uncharacterized protein YLL019W-A</fullName>
    </recommendedName>
</protein>